<accession>P0CI64</accession>
<accession>Q0CF61</accession>
<name>PEP2_ASPTN</name>
<evidence type="ECO:0000256" key="1">
    <source>
        <dbReference type="SAM" id="MobiDB-lite"/>
    </source>
</evidence>
<evidence type="ECO:0000305" key="2"/>
<reference key="1">
    <citation type="submission" date="2005-09" db="EMBL/GenBank/DDBJ databases">
        <title>Annotation of the Aspergillus terreus NIH2624 genome.</title>
        <authorList>
            <person name="Birren B.W."/>
            <person name="Lander E.S."/>
            <person name="Galagan J.E."/>
            <person name="Nusbaum C."/>
            <person name="Devon K."/>
            <person name="Henn M."/>
            <person name="Ma L.-J."/>
            <person name="Jaffe D.B."/>
            <person name="Butler J."/>
            <person name="Alvarez P."/>
            <person name="Gnerre S."/>
            <person name="Grabherr M."/>
            <person name="Kleber M."/>
            <person name="Mauceli E.W."/>
            <person name="Brockman W."/>
            <person name="Rounsley S."/>
            <person name="Young S.K."/>
            <person name="LaButti K."/>
            <person name="Pushparaj V."/>
            <person name="DeCaprio D."/>
            <person name="Crawford M."/>
            <person name="Koehrsen M."/>
            <person name="Engels R."/>
            <person name="Montgomery P."/>
            <person name="Pearson M."/>
            <person name="Howarth C."/>
            <person name="Larson L."/>
            <person name="Luoma S."/>
            <person name="White J."/>
            <person name="Alvarado L."/>
            <person name="Kodira C.D."/>
            <person name="Zeng Q."/>
            <person name="Oleary S."/>
            <person name="Yandava C."/>
            <person name="Denning D.W."/>
            <person name="Nierman W.C."/>
            <person name="Milne T."/>
            <person name="Madden K."/>
        </authorList>
    </citation>
    <scope>NUCLEOTIDE SEQUENCE [LARGE SCALE GENOMIC DNA]</scope>
    <source>
        <strain>NIH 2624 / FGSC A1156</strain>
    </source>
</reference>
<dbReference type="EMBL" id="CH476604">
    <property type="protein sequence ID" value="EAU31935.1"/>
    <property type="status" value="ALT_SEQ"/>
    <property type="molecule type" value="Genomic_DNA"/>
</dbReference>
<dbReference type="RefSeq" id="XP_001216294.1">
    <property type="nucleotide sequence ID" value="XM_001216294.1"/>
</dbReference>
<dbReference type="SMR" id="P0CI64"/>
<dbReference type="EnsemblFungi" id="EAU31935">
    <property type="protein sequence ID" value="EAU31935"/>
    <property type="gene ID" value="ATEG_07673"/>
</dbReference>
<dbReference type="eggNOG" id="ENOG502RYCB">
    <property type="taxonomic scope" value="Eukaryota"/>
</dbReference>
<dbReference type="OrthoDB" id="2533647at2759"/>
<dbReference type="Proteomes" id="UP000007963">
    <property type="component" value="Unassembled WGS sequence"/>
</dbReference>
<dbReference type="Gene3D" id="3.10.450.50">
    <property type="match status" value="1"/>
</dbReference>
<dbReference type="InterPro" id="IPR032710">
    <property type="entry name" value="NTF2-like_dom_sf"/>
</dbReference>
<dbReference type="InterPro" id="IPR037401">
    <property type="entry name" value="SnoaL-like"/>
</dbReference>
<dbReference type="Pfam" id="PF13577">
    <property type="entry name" value="SnoaL_4"/>
    <property type="match status" value="1"/>
</dbReference>
<dbReference type="SUPFAM" id="SSF54427">
    <property type="entry name" value="NTF2-like"/>
    <property type="match status" value="1"/>
</dbReference>
<feature type="chain" id="PRO_0000402439" description="Uncharacterized protein ATEG_07673.1">
    <location>
        <begin position="1"/>
        <end position="271"/>
    </location>
</feature>
<feature type="region of interest" description="Disordered" evidence="1">
    <location>
        <begin position="1"/>
        <end position="20"/>
    </location>
</feature>
<organism>
    <name type="scientific">Aspergillus terreus (strain NIH 2624 / FGSC A1156)</name>
    <dbReference type="NCBI Taxonomy" id="341663"/>
    <lineage>
        <taxon>Eukaryota</taxon>
        <taxon>Fungi</taxon>
        <taxon>Dikarya</taxon>
        <taxon>Ascomycota</taxon>
        <taxon>Pezizomycotina</taxon>
        <taxon>Eurotiomycetes</taxon>
        <taxon>Eurotiomycetidae</taxon>
        <taxon>Eurotiales</taxon>
        <taxon>Aspergillaceae</taxon>
        <taxon>Aspergillus</taxon>
        <taxon>Aspergillus subgen. Circumdati</taxon>
    </lineage>
</organism>
<proteinExistence type="inferred from homology"/>
<keyword id="KW-1185">Reference proteome</keyword>
<gene>
    <name type="ORF">ATEG_07673.1</name>
</gene>
<comment type="similarity">
    <text evidence="2">Belongs to the PEP2 family.</text>
</comment>
<comment type="sequence caution" evidence="2">
    <conflict type="erroneous gene model prediction">
        <sequence resource="EMBL-CDS" id="EAU31935"/>
    </conflict>
    <text>The predicted gene ATEG_07673 has been split into 2 genes: ATEG_07673.1 and ATEG_07673.2.</text>
</comment>
<protein>
    <recommendedName>
        <fullName>Uncharacterized protein ATEG_07673.1</fullName>
    </recommendedName>
</protein>
<sequence length="271" mass="31202">MPDLHTLPAGSRPERAIRNNGPSDLALERYKLRELAEGWPCYRDACEWENLRSIFHPDAHIYTTWTGLTHHLQFIEASKTGMDNGVFIMHRIHGSTTDIDPSGVRAVTKMKATITQRFSGLPCVSGGTCEADAESDCRFIFFWEKLDGSEYPELDQQWRARFVRHWYEKDKLIAVTAGRDPVIDLEKLQQYPPGYRHLAYLQESTMGVKVLLDLPGHRREGSTVNGQKHDLFQEYPMLHGCNSYKDNRGFPTTLKSIALREIRMKYLFDVI</sequence>